<evidence type="ECO:0000255" key="1">
    <source>
        <dbReference type="HAMAP-Rule" id="MF_00017"/>
    </source>
</evidence>
<proteinExistence type="inferred from homology"/>
<keyword id="KW-0227">DNA damage</keyword>
<keyword id="KW-0233">DNA recombination</keyword>
<keyword id="KW-0234">DNA repair</keyword>
<keyword id="KW-0479">Metal-binding</keyword>
<keyword id="KW-0862">Zinc</keyword>
<keyword id="KW-0863">Zinc-finger</keyword>
<comment type="function">
    <text evidence="1">May play a role in DNA repair. It seems to be involved in an RecBC-independent recombinational process of DNA repair. It may act with RecF and RecO.</text>
</comment>
<comment type="similarity">
    <text evidence="1">Belongs to the RecR family.</text>
</comment>
<protein>
    <recommendedName>
        <fullName evidence="1">Recombination protein RecR</fullName>
    </recommendedName>
</protein>
<name>RECR_PROMS</name>
<accession>A2BRS6</accession>
<gene>
    <name evidence="1" type="primary">recR</name>
    <name type="ordered locus">A9601_12031</name>
</gene>
<organism>
    <name type="scientific">Prochlorococcus marinus (strain AS9601)</name>
    <dbReference type="NCBI Taxonomy" id="146891"/>
    <lineage>
        <taxon>Bacteria</taxon>
        <taxon>Bacillati</taxon>
        <taxon>Cyanobacteriota</taxon>
        <taxon>Cyanophyceae</taxon>
        <taxon>Synechococcales</taxon>
        <taxon>Prochlorococcaceae</taxon>
        <taxon>Prochlorococcus</taxon>
    </lineage>
</organism>
<sequence>MITYTKPLSKLIGHFEKFPGIGPRTAQRLALFILKQPESTIRDFSKALLEAHNNVGRCKKCFNLTSEDECEICRNTERNQKLICVVSETKDLLALERAREFKGVYHVIGGLISPMDSVGPELLEIRSLVERVSKSEIDEIILALTPSVEGDTTSLYIGKLLSPFTKVTRIAYGLPMGSELEYVDEVTLARALEGRTKLN</sequence>
<feature type="chain" id="PRO_1000001578" description="Recombination protein RecR">
    <location>
        <begin position="1"/>
        <end position="199"/>
    </location>
</feature>
<feature type="domain" description="Toprim" evidence="1">
    <location>
        <begin position="81"/>
        <end position="175"/>
    </location>
</feature>
<feature type="zinc finger region" description="C4-type" evidence="1">
    <location>
        <begin position="58"/>
        <end position="73"/>
    </location>
</feature>
<dbReference type="EMBL" id="CP000551">
    <property type="protein sequence ID" value="ABM70487.1"/>
    <property type="molecule type" value="Genomic_DNA"/>
</dbReference>
<dbReference type="RefSeq" id="WP_011818634.1">
    <property type="nucleotide sequence ID" value="NC_008816.1"/>
</dbReference>
<dbReference type="SMR" id="A2BRS6"/>
<dbReference type="STRING" id="146891.A9601_12031"/>
<dbReference type="KEGG" id="pmb:A9601_12031"/>
<dbReference type="eggNOG" id="COG0353">
    <property type="taxonomic scope" value="Bacteria"/>
</dbReference>
<dbReference type="HOGENOM" id="CLU_060739_1_0_3"/>
<dbReference type="OrthoDB" id="9802672at2"/>
<dbReference type="Proteomes" id="UP000002590">
    <property type="component" value="Chromosome"/>
</dbReference>
<dbReference type="GO" id="GO:0003677">
    <property type="term" value="F:DNA binding"/>
    <property type="evidence" value="ECO:0007669"/>
    <property type="project" value="UniProtKB-UniRule"/>
</dbReference>
<dbReference type="GO" id="GO:0008270">
    <property type="term" value="F:zinc ion binding"/>
    <property type="evidence" value="ECO:0007669"/>
    <property type="project" value="UniProtKB-KW"/>
</dbReference>
<dbReference type="GO" id="GO:0006310">
    <property type="term" value="P:DNA recombination"/>
    <property type="evidence" value="ECO:0007669"/>
    <property type="project" value="UniProtKB-UniRule"/>
</dbReference>
<dbReference type="GO" id="GO:0006281">
    <property type="term" value="P:DNA repair"/>
    <property type="evidence" value="ECO:0007669"/>
    <property type="project" value="UniProtKB-UniRule"/>
</dbReference>
<dbReference type="CDD" id="cd01025">
    <property type="entry name" value="TOPRIM_recR"/>
    <property type="match status" value="1"/>
</dbReference>
<dbReference type="Gene3D" id="3.30.60.80">
    <property type="match status" value="1"/>
</dbReference>
<dbReference type="Gene3D" id="3.40.1360.10">
    <property type="match status" value="1"/>
</dbReference>
<dbReference type="Gene3D" id="6.10.250.240">
    <property type="match status" value="1"/>
</dbReference>
<dbReference type="Gene3D" id="1.10.8.420">
    <property type="entry name" value="RecR Domain 1"/>
    <property type="match status" value="1"/>
</dbReference>
<dbReference type="HAMAP" id="MF_00017">
    <property type="entry name" value="RecR"/>
    <property type="match status" value="1"/>
</dbReference>
<dbReference type="InterPro" id="IPR000093">
    <property type="entry name" value="DNA_Rcmb_RecR"/>
</dbReference>
<dbReference type="InterPro" id="IPR023627">
    <property type="entry name" value="Rcmb_RecR"/>
</dbReference>
<dbReference type="InterPro" id="IPR015967">
    <property type="entry name" value="Rcmb_RecR_Znf"/>
</dbReference>
<dbReference type="InterPro" id="IPR006171">
    <property type="entry name" value="TOPRIM_dom"/>
</dbReference>
<dbReference type="InterPro" id="IPR034137">
    <property type="entry name" value="TOPRIM_RecR"/>
</dbReference>
<dbReference type="NCBIfam" id="TIGR00615">
    <property type="entry name" value="recR"/>
    <property type="match status" value="1"/>
</dbReference>
<dbReference type="PANTHER" id="PTHR30446">
    <property type="entry name" value="RECOMBINATION PROTEIN RECR"/>
    <property type="match status" value="1"/>
</dbReference>
<dbReference type="PANTHER" id="PTHR30446:SF0">
    <property type="entry name" value="RECOMBINATION PROTEIN RECR"/>
    <property type="match status" value="1"/>
</dbReference>
<dbReference type="Pfam" id="PF21175">
    <property type="entry name" value="RecR_C"/>
    <property type="match status" value="1"/>
</dbReference>
<dbReference type="Pfam" id="PF21176">
    <property type="entry name" value="RecR_HhH"/>
    <property type="match status" value="1"/>
</dbReference>
<dbReference type="Pfam" id="PF02132">
    <property type="entry name" value="RecR_ZnF"/>
    <property type="match status" value="1"/>
</dbReference>
<dbReference type="Pfam" id="PF13662">
    <property type="entry name" value="Toprim_4"/>
    <property type="match status" value="1"/>
</dbReference>
<dbReference type="SMART" id="SM00493">
    <property type="entry name" value="TOPRIM"/>
    <property type="match status" value="1"/>
</dbReference>
<dbReference type="SUPFAM" id="SSF111304">
    <property type="entry name" value="Recombination protein RecR"/>
    <property type="match status" value="1"/>
</dbReference>
<dbReference type="PROSITE" id="PS01300">
    <property type="entry name" value="RECR"/>
    <property type="match status" value="1"/>
</dbReference>
<dbReference type="PROSITE" id="PS50880">
    <property type="entry name" value="TOPRIM"/>
    <property type="match status" value="1"/>
</dbReference>
<reference key="1">
    <citation type="journal article" date="2007" name="PLoS Genet.">
        <title>Patterns and implications of gene gain and loss in the evolution of Prochlorococcus.</title>
        <authorList>
            <person name="Kettler G.C."/>
            <person name="Martiny A.C."/>
            <person name="Huang K."/>
            <person name="Zucker J."/>
            <person name="Coleman M.L."/>
            <person name="Rodrigue S."/>
            <person name="Chen F."/>
            <person name="Lapidus A."/>
            <person name="Ferriera S."/>
            <person name="Johnson J."/>
            <person name="Steglich C."/>
            <person name="Church G.M."/>
            <person name="Richardson P."/>
            <person name="Chisholm S.W."/>
        </authorList>
    </citation>
    <scope>NUCLEOTIDE SEQUENCE [LARGE SCALE GENOMIC DNA]</scope>
    <source>
        <strain>AS9601</strain>
    </source>
</reference>